<reference key="1">
    <citation type="journal article" date="2002" name="Environ. Microbiol.">
        <title>Complete genome sequence and comparative analysis of the metabolically versatile Pseudomonas putida KT2440.</title>
        <authorList>
            <person name="Nelson K.E."/>
            <person name="Weinel C."/>
            <person name="Paulsen I.T."/>
            <person name="Dodson R.J."/>
            <person name="Hilbert H."/>
            <person name="Martins dos Santos V.A.P."/>
            <person name="Fouts D.E."/>
            <person name="Gill S.R."/>
            <person name="Pop M."/>
            <person name="Holmes M."/>
            <person name="Brinkac L.M."/>
            <person name="Beanan M.J."/>
            <person name="DeBoy R.T."/>
            <person name="Daugherty S.C."/>
            <person name="Kolonay J.F."/>
            <person name="Madupu R."/>
            <person name="Nelson W.C."/>
            <person name="White O."/>
            <person name="Peterson J.D."/>
            <person name="Khouri H.M."/>
            <person name="Hance I."/>
            <person name="Chris Lee P."/>
            <person name="Holtzapple E.K."/>
            <person name="Scanlan D."/>
            <person name="Tran K."/>
            <person name="Moazzez A."/>
            <person name="Utterback T.R."/>
            <person name="Rizzo M."/>
            <person name="Lee K."/>
            <person name="Kosack D."/>
            <person name="Moestl D."/>
            <person name="Wedler H."/>
            <person name="Lauber J."/>
            <person name="Stjepandic D."/>
            <person name="Hoheisel J."/>
            <person name="Straetz M."/>
            <person name="Heim S."/>
            <person name="Kiewitz C."/>
            <person name="Eisen J.A."/>
            <person name="Timmis K.N."/>
            <person name="Duesterhoeft A."/>
            <person name="Tuemmler B."/>
            <person name="Fraser C.M."/>
        </authorList>
    </citation>
    <scope>NUCLEOTIDE SEQUENCE [LARGE SCALE GENOMIC DNA]</scope>
    <source>
        <strain>ATCC 47054 / DSM 6125 / CFBP 8728 / NCIMB 11950 / KT2440</strain>
    </source>
</reference>
<name>RL30_PSEPK</name>
<evidence type="ECO:0000255" key="1">
    <source>
        <dbReference type="HAMAP-Rule" id="MF_01371"/>
    </source>
</evidence>
<evidence type="ECO:0000305" key="2"/>
<accession>Q88QL7</accession>
<feature type="chain" id="PRO_0000273829" description="Large ribosomal subunit protein uL30">
    <location>
        <begin position="1"/>
        <end position="58"/>
    </location>
</feature>
<dbReference type="EMBL" id="AE015451">
    <property type="protein sequence ID" value="AAN66102.1"/>
    <property type="molecule type" value="Genomic_DNA"/>
</dbReference>
<dbReference type="RefSeq" id="NP_742638.1">
    <property type="nucleotide sequence ID" value="NC_002947.4"/>
</dbReference>
<dbReference type="RefSeq" id="WP_003255463.1">
    <property type="nucleotide sequence ID" value="NZ_CP169744.1"/>
</dbReference>
<dbReference type="SMR" id="Q88QL7"/>
<dbReference type="STRING" id="160488.PP_0472"/>
<dbReference type="PaxDb" id="160488-PP_0472"/>
<dbReference type="GeneID" id="97165997"/>
<dbReference type="KEGG" id="ppu:PP_0472"/>
<dbReference type="PATRIC" id="fig|160488.4.peg.504"/>
<dbReference type="eggNOG" id="COG1841">
    <property type="taxonomic scope" value="Bacteria"/>
</dbReference>
<dbReference type="HOGENOM" id="CLU_131047_1_4_6"/>
<dbReference type="OrthoDB" id="9812790at2"/>
<dbReference type="PhylomeDB" id="Q88QL7"/>
<dbReference type="BioCyc" id="PPUT160488:G1G01-518-MONOMER"/>
<dbReference type="Proteomes" id="UP000000556">
    <property type="component" value="Chromosome"/>
</dbReference>
<dbReference type="GO" id="GO:0022625">
    <property type="term" value="C:cytosolic large ribosomal subunit"/>
    <property type="evidence" value="ECO:0007669"/>
    <property type="project" value="TreeGrafter"/>
</dbReference>
<dbReference type="GO" id="GO:0003735">
    <property type="term" value="F:structural constituent of ribosome"/>
    <property type="evidence" value="ECO:0007669"/>
    <property type="project" value="InterPro"/>
</dbReference>
<dbReference type="GO" id="GO:0006412">
    <property type="term" value="P:translation"/>
    <property type="evidence" value="ECO:0007669"/>
    <property type="project" value="UniProtKB-UniRule"/>
</dbReference>
<dbReference type="CDD" id="cd01658">
    <property type="entry name" value="Ribosomal_L30"/>
    <property type="match status" value="1"/>
</dbReference>
<dbReference type="FunFam" id="3.30.1390.20:FF:000001">
    <property type="entry name" value="50S ribosomal protein L30"/>
    <property type="match status" value="1"/>
</dbReference>
<dbReference type="Gene3D" id="3.30.1390.20">
    <property type="entry name" value="Ribosomal protein L30, ferredoxin-like fold domain"/>
    <property type="match status" value="1"/>
</dbReference>
<dbReference type="HAMAP" id="MF_01371_B">
    <property type="entry name" value="Ribosomal_uL30_B"/>
    <property type="match status" value="1"/>
</dbReference>
<dbReference type="InterPro" id="IPR036919">
    <property type="entry name" value="Ribo_uL30_ferredoxin-like_sf"/>
</dbReference>
<dbReference type="InterPro" id="IPR005996">
    <property type="entry name" value="Ribosomal_uL30_bac-type"/>
</dbReference>
<dbReference type="InterPro" id="IPR016082">
    <property type="entry name" value="Ribosomal_uL30_ferredoxin-like"/>
</dbReference>
<dbReference type="NCBIfam" id="TIGR01308">
    <property type="entry name" value="rpmD_bact"/>
    <property type="match status" value="1"/>
</dbReference>
<dbReference type="PANTHER" id="PTHR15892:SF2">
    <property type="entry name" value="LARGE RIBOSOMAL SUBUNIT PROTEIN UL30M"/>
    <property type="match status" value="1"/>
</dbReference>
<dbReference type="PANTHER" id="PTHR15892">
    <property type="entry name" value="MITOCHONDRIAL RIBOSOMAL PROTEIN L30"/>
    <property type="match status" value="1"/>
</dbReference>
<dbReference type="Pfam" id="PF00327">
    <property type="entry name" value="Ribosomal_L30"/>
    <property type="match status" value="1"/>
</dbReference>
<dbReference type="PIRSF" id="PIRSF002211">
    <property type="entry name" value="Ribosomal_L30_bac-type"/>
    <property type="match status" value="1"/>
</dbReference>
<dbReference type="SUPFAM" id="SSF55129">
    <property type="entry name" value="Ribosomal protein L30p/L7e"/>
    <property type="match status" value="1"/>
</dbReference>
<protein>
    <recommendedName>
        <fullName evidence="1">Large ribosomal subunit protein uL30</fullName>
    </recommendedName>
    <alternativeName>
        <fullName evidence="2">50S ribosomal protein L30</fullName>
    </alternativeName>
</protein>
<organism>
    <name type="scientific">Pseudomonas putida (strain ATCC 47054 / DSM 6125 / CFBP 8728 / NCIMB 11950 / KT2440)</name>
    <dbReference type="NCBI Taxonomy" id="160488"/>
    <lineage>
        <taxon>Bacteria</taxon>
        <taxon>Pseudomonadati</taxon>
        <taxon>Pseudomonadota</taxon>
        <taxon>Gammaproteobacteria</taxon>
        <taxon>Pseudomonadales</taxon>
        <taxon>Pseudomonadaceae</taxon>
        <taxon>Pseudomonas</taxon>
    </lineage>
</organism>
<keyword id="KW-1185">Reference proteome</keyword>
<keyword id="KW-0687">Ribonucleoprotein</keyword>
<keyword id="KW-0689">Ribosomal protein</keyword>
<sequence length="58" mass="6452">MATVKVTLIKSVSGRLPNHKLCVKGLGLRRIGHTVEVQDTPENRGMINKAYYMLKVEG</sequence>
<comment type="subunit">
    <text evidence="1">Part of the 50S ribosomal subunit.</text>
</comment>
<comment type="similarity">
    <text evidence="1">Belongs to the universal ribosomal protein uL30 family.</text>
</comment>
<proteinExistence type="inferred from homology"/>
<gene>
    <name evidence="1" type="primary">rpmD</name>
    <name type="ordered locus">PP_0472</name>
</gene>